<protein>
    <recommendedName>
        <fullName evidence="1">Acetylglutamate kinase</fullName>
        <ecNumber evidence="1">2.7.2.8</ecNumber>
    </recommendedName>
    <alternativeName>
        <fullName evidence="1">N-acetyl-L-glutamate 5-phosphotransferase</fullName>
    </alternativeName>
    <alternativeName>
        <fullName evidence="1">NAG kinase</fullName>
        <shortName evidence="1">NAGK</shortName>
    </alternativeName>
</protein>
<reference key="1">
    <citation type="journal article" date="2004" name="Science">
        <title>The complete genome sequence of Propionibacterium acnes, a commensal of human skin.</title>
        <authorList>
            <person name="Brueggemann H."/>
            <person name="Henne A."/>
            <person name="Hoster F."/>
            <person name="Liesegang H."/>
            <person name="Wiezer A."/>
            <person name="Strittmatter A."/>
            <person name="Hujer S."/>
            <person name="Duerre P."/>
            <person name="Gottschalk G."/>
        </authorList>
    </citation>
    <scope>NUCLEOTIDE SEQUENCE [LARGE SCALE GENOMIC DNA]</scope>
    <source>
        <strain>DSM 16379 / KPA171202</strain>
    </source>
</reference>
<gene>
    <name evidence="1" type="primary">argB</name>
    <name type="ordered locus">PPA1348</name>
</gene>
<organism>
    <name type="scientific">Cutibacterium acnes (strain DSM 16379 / KPA171202)</name>
    <name type="common">Propionibacterium acnes</name>
    <dbReference type="NCBI Taxonomy" id="267747"/>
    <lineage>
        <taxon>Bacteria</taxon>
        <taxon>Bacillati</taxon>
        <taxon>Actinomycetota</taxon>
        <taxon>Actinomycetes</taxon>
        <taxon>Propionibacteriales</taxon>
        <taxon>Propionibacteriaceae</taxon>
        <taxon>Cutibacterium</taxon>
    </lineage>
</organism>
<comment type="function">
    <text evidence="1">Catalyzes the ATP-dependent phosphorylation of N-acetyl-L-glutamate.</text>
</comment>
<comment type="catalytic activity">
    <reaction evidence="1">
        <text>N-acetyl-L-glutamate + ATP = N-acetyl-L-glutamyl 5-phosphate + ADP</text>
        <dbReference type="Rhea" id="RHEA:14629"/>
        <dbReference type="ChEBI" id="CHEBI:30616"/>
        <dbReference type="ChEBI" id="CHEBI:44337"/>
        <dbReference type="ChEBI" id="CHEBI:57936"/>
        <dbReference type="ChEBI" id="CHEBI:456216"/>
        <dbReference type="EC" id="2.7.2.8"/>
    </reaction>
</comment>
<comment type="pathway">
    <text evidence="1">Amino-acid biosynthesis; L-arginine biosynthesis; N(2)-acetyl-L-ornithine from L-glutamate: step 2/4.</text>
</comment>
<comment type="subcellular location">
    <subcellularLocation>
        <location evidence="1">Cytoplasm</location>
    </subcellularLocation>
</comment>
<comment type="similarity">
    <text evidence="1">Belongs to the acetylglutamate kinase family. ArgB subfamily.</text>
</comment>
<evidence type="ECO:0000255" key="1">
    <source>
        <dbReference type="HAMAP-Rule" id="MF_00082"/>
    </source>
</evidence>
<dbReference type="EC" id="2.7.2.8" evidence="1"/>
<dbReference type="EMBL" id="AE017283">
    <property type="protein sequence ID" value="AAT83101.1"/>
    <property type="molecule type" value="Genomic_DNA"/>
</dbReference>
<dbReference type="RefSeq" id="WP_002516381.1">
    <property type="nucleotide sequence ID" value="NZ_CP025935.1"/>
</dbReference>
<dbReference type="SMR" id="Q6A814"/>
<dbReference type="EnsemblBacteria" id="AAT83101">
    <property type="protein sequence ID" value="AAT83101"/>
    <property type="gene ID" value="PPA1348"/>
</dbReference>
<dbReference type="GeneID" id="92857324"/>
<dbReference type="KEGG" id="pac:PPA1348"/>
<dbReference type="eggNOG" id="COG0548">
    <property type="taxonomic scope" value="Bacteria"/>
</dbReference>
<dbReference type="HOGENOM" id="CLU_053680_0_0_11"/>
<dbReference type="UniPathway" id="UPA00068">
    <property type="reaction ID" value="UER00107"/>
</dbReference>
<dbReference type="Proteomes" id="UP000000603">
    <property type="component" value="Chromosome"/>
</dbReference>
<dbReference type="GO" id="GO:0005737">
    <property type="term" value="C:cytoplasm"/>
    <property type="evidence" value="ECO:0007669"/>
    <property type="project" value="UniProtKB-SubCell"/>
</dbReference>
<dbReference type="GO" id="GO:0003991">
    <property type="term" value="F:acetylglutamate kinase activity"/>
    <property type="evidence" value="ECO:0007669"/>
    <property type="project" value="UniProtKB-UniRule"/>
</dbReference>
<dbReference type="GO" id="GO:0005524">
    <property type="term" value="F:ATP binding"/>
    <property type="evidence" value="ECO:0007669"/>
    <property type="project" value="UniProtKB-UniRule"/>
</dbReference>
<dbReference type="GO" id="GO:0042450">
    <property type="term" value="P:arginine biosynthetic process via ornithine"/>
    <property type="evidence" value="ECO:0007669"/>
    <property type="project" value="UniProtKB-UniRule"/>
</dbReference>
<dbReference type="GO" id="GO:0006526">
    <property type="term" value="P:L-arginine biosynthetic process"/>
    <property type="evidence" value="ECO:0007669"/>
    <property type="project" value="UniProtKB-UniPathway"/>
</dbReference>
<dbReference type="CDD" id="cd04250">
    <property type="entry name" value="AAK_NAGK-C"/>
    <property type="match status" value="1"/>
</dbReference>
<dbReference type="FunFam" id="3.40.1160.10:FF:000004">
    <property type="entry name" value="Acetylglutamate kinase"/>
    <property type="match status" value="1"/>
</dbReference>
<dbReference type="Gene3D" id="3.40.1160.10">
    <property type="entry name" value="Acetylglutamate kinase-like"/>
    <property type="match status" value="1"/>
</dbReference>
<dbReference type="HAMAP" id="MF_00082">
    <property type="entry name" value="ArgB"/>
    <property type="match status" value="1"/>
</dbReference>
<dbReference type="InterPro" id="IPR036393">
    <property type="entry name" value="AceGlu_kinase-like_sf"/>
</dbReference>
<dbReference type="InterPro" id="IPR004662">
    <property type="entry name" value="AcgluKinase_fam"/>
</dbReference>
<dbReference type="InterPro" id="IPR037528">
    <property type="entry name" value="ArgB"/>
</dbReference>
<dbReference type="InterPro" id="IPR001048">
    <property type="entry name" value="Asp/Glu/Uridylate_kinase"/>
</dbReference>
<dbReference type="InterPro" id="IPR001057">
    <property type="entry name" value="Glu/AcGlu_kinase"/>
</dbReference>
<dbReference type="InterPro" id="IPR041727">
    <property type="entry name" value="NAGK-C"/>
</dbReference>
<dbReference type="NCBIfam" id="TIGR00761">
    <property type="entry name" value="argB"/>
    <property type="match status" value="1"/>
</dbReference>
<dbReference type="PANTHER" id="PTHR23342">
    <property type="entry name" value="N-ACETYLGLUTAMATE SYNTHASE"/>
    <property type="match status" value="1"/>
</dbReference>
<dbReference type="PANTHER" id="PTHR23342:SF0">
    <property type="entry name" value="N-ACETYLGLUTAMATE SYNTHASE, MITOCHONDRIAL"/>
    <property type="match status" value="1"/>
</dbReference>
<dbReference type="Pfam" id="PF00696">
    <property type="entry name" value="AA_kinase"/>
    <property type="match status" value="1"/>
</dbReference>
<dbReference type="PIRSF" id="PIRSF000728">
    <property type="entry name" value="NAGK"/>
    <property type="match status" value="1"/>
</dbReference>
<dbReference type="PRINTS" id="PR00474">
    <property type="entry name" value="GLU5KINASE"/>
</dbReference>
<dbReference type="SUPFAM" id="SSF53633">
    <property type="entry name" value="Carbamate kinase-like"/>
    <property type="match status" value="1"/>
</dbReference>
<accession>Q6A814</accession>
<proteinExistence type="inferred from homology"/>
<name>ARGB_CUTAK</name>
<sequence length="310" mass="32913">MTLALDIPLNDTQFSAQRKSEVLVEALPWIRRFQGRTVVVKYGGNAMVDPGLQQAFADDIVFMASVGIRPIVVHGGGPQINAMLAESATPVEFRNGLRVTSPEVMEVVRMVLVGQVGRQLVNRINAYAPLAAGMSGEDSGLLSARKSRVIVDGEQIDMGLVGDIVDVNIDLVISMLDRGQIPVIAPVSPEVDAAGRPTGQVLNVNADTAATAIAQALRAEKLVMLTNVAGIYGTWPDPHTLISEVSASDLRAMIPRLGEGMRPKAQALLDAIDGGVSSAAIVDGRIEHALLLEIFTTRGVGTMARSDDYV</sequence>
<feature type="chain" id="PRO_0000112646" description="Acetylglutamate kinase">
    <location>
        <begin position="1"/>
        <end position="310"/>
    </location>
</feature>
<feature type="binding site" evidence="1">
    <location>
        <begin position="76"/>
        <end position="77"/>
    </location>
    <ligand>
        <name>substrate</name>
    </ligand>
</feature>
<feature type="binding site" evidence="1">
    <location>
        <position position="98"/>
    </location>
    <ligand>
        <name>substrate</name>
    </ligand>
</feature>
<feature type="binding site" evidence="1">
    <location>
        <position position="203"/>
    </location>
    <ligand>
        <name>substrate</name>
    </ligand>
</feature>
<feature type="site" description="Transition state stabilizer" evidence="1">
    <location>
        <position position="41"/>
    </location>
</feature>
<feature type="site" description="Transition state stabilizer" evidence="1">
    <location>
        <position position="264"/>
    </location>
</feature>
<keyword id="KW-0028">Amino-acid biosynthesis</keyword>
<keyword id="KW-0055">Arginine biosynthesis</keyword>
<keyword id="KW-0067">ATP-binding</keyword>
<keyword id="KW-0963">Cytoplasm</keyword>
<keyword id="KW-0418">Kinase</keyword>
<keyword id="KW-0547">Nucleotide-binding</keyword>
<keyword id="KW-0808">Transferase</keyword>